<comment type="function">
    <text>Major component of the vertebrate myofibrillar M band. Binds myosin, titin, and light meromyosin. This binding is dose dependent.</text>
</comment>
<comment type="subunit">
    <text evidence="1 7">Homodimer (By similarity). Interacts with TTN/titin (By similarity). Interacts with PNKD.</text>
</comment>
<comment type="interaction">
    <interactant intactId="EBI-5353249">
        <id>P52179</id>
    </interactant>
    <interactant intactId="EBI-2799016">
        <id>O75923</id>
        <label>DYSF</label>
    </interactant>
    <organismsDiffer>false</organismsDiffer>
    <experiments>3</experiments>
</comment>
<comment type="interaction">
    <interactant intactId="EBI-5353249">
        <id>P52179</id>
    </interactant>
    <interactant intactId="EBI-5353249">
        <id>P52179</id>
        <label>MYOM1</label>
    </interactant>
    <organismsDiffer>false</organismsDiffer>
    <experiments>4</experiments>
</comment>
<comment type="interaction">
    <interactant intactId="EBI-15971501">
        <id>P52179-1</id>
    </interactant>
    <interactant intactId="EBI-15971501">
        <id>P52179-1</id>
        <label>MYOM1</label>
    </interactant>
    <organismsDiffer>false</organismsDiffer>
    <experiments>7</experiments>
</comment>
<comment type="interaction">
    <interactant intactId="EBI-12010196">
        <id>P52179-2</id>
    </interactant>
    <interactant intactId="EBI-948001">
        <id>Q15323</id>
        <label>KRT31</label>
    </interactant>
    <organismsDiffer>false</organismsDiffer>
    <experiments>3</experiments>
</comment>
<comment type="interaction">
    <interactant intactId="EBI-12010196">
        <id>P52179-2</id>
    </interactant>
    <interactant intactId="EBI-11959885">
        <id>Q07627</id>
        <label>KRTAP1-1</label>
    </interactant>
    <organismsDiffer>false</organismsDiffer>
    <experiments>3</experiments>
</comment>
<comment type="interaction">
    <interactant intactId="EBI-12010196">
        <id>P52179-2</id>
    </interactant>
    <interactant intactId="EBI-11987425">
        <id>Q6L8G8</id>
        <label>KRTAP5-7</label>
    </interactant>
    <organismsDiffer>false</organismsDiffer>
    <experiments>3</experiments>
</comment>
<comment type="interaction">
    <interactant intactId="EBI-12010196">
        <id>P52179-2</id>
    </interactant>
    <interactant intactId="EBI-11522433">
        <id>Q5JR59-3</id>
        <label>MTUS2</label>
    </interactant>
    <organismsDiffer>false</organismsDiffer>
    <experiments>3</experiments>
</comment>
<comment type="interaction">
    <interactant intactId="EBI-12010196">
        <id>P52179-2</id>
    </interactant>
    <interactant intactId="EBI-9640281">
        <id>Q5VU43-2</id>
        <label>PDE4DIP</label>
    </interactant>
    <organismsDiffer>false</organismsDiffer>
    <experiments>3</experiments>
</comment>
<comment type="interaction">
    <interactant intactId="EBI-12010196">
        <id>P52179-2</id>
    </interactant>
    <interactant intactId="EBI-710402">
        <id>Q96I34</id>
        <label>PPP1R16A</label>
    </interactant>
    <organismsDiffer>false</organismsDiffer>
    <experiments>3</experiments>
</comment>
<comment type="interaction">
    <interactant intactId="EBI-12010196">
        <id>P52179-2</id>
    </interactant>
    <interactant intactId="EBI-1105213">
        <id>Q9UBB9</id>
        <label>TFIP11</label>
    </interactant>
    <organismsDiffer>false</organismsDiffer>
    <experiments>3</experiments>
</comment>
<comment type="interaction">
    <interactant intactId="EBI-12010196">
        <id>P52179-2</id>
    </interactant>
    <interactant intactId="EBI-740098">
        <id>P36406</id>
        <label>TRIM23</label>
    </interactant>
    <organismsDiffer>false</organismsDiffer>
    <experiments>3</experiments>
</comment>
<comment type="subcellular location">
    <subcellularLocation>
        <location evidence="1">Cytoplasm</location>
        <location evidence="1">Myofibril</location>
        <location evidence="1">Sarcomere</location>
        <location evidence="1">M line</location>
    </subcellularLocation>
</comment>
<comment type="alternative products">
    <event type="alternative splicing"/>
    <isoform>
        <id>P52179-1</id>
        <name>1</name>
        <sequence type="displayed"/>
    </isoform>
    <isoform>
        <id>P52179-2</id>
        <name>2</name>
        <sequence type="described" ref="VSP_035663"/>
    </isoform>
</comment>
<comment type="sequence caution" evidence="13">
    <conflict type="erroneous initiation">
        <sequence resource="EMBL-CDS" id="CAA48833"/>
    </conflict>
</comment>
<dbReference type="EMBL" id="AJ621424">
    <property type="protein sequence ID" value="CAF18565.1"/>
    <property type="molecule type" value="mRNA"/>
</dbReference>
<dbReference type="EMBL" id="AK125322">
    <property type="protein sequence ID" value="BAC86128.1"/>
    <property type="molecule type" value="mRNA"/>
</dbReference>
<dbReference type="EMBL" id="AP005329">
    <property type="status" value="NOT_ANNOTATED_CDS"/>
    <property type="molecule type" value="Genomic_DNA"/>
</dbReference>
<dbReference type="EMBL" id="AP005431">
    <property type="status" value="NOT_ANNOTATED_CDS"/>
    <property type="molecule type" value="Genomic_DNA"/>
</dbReference>
<dbReference type="EMBL" id="BC116183">
    <property type="protein sequence ID" value="AAI16184.1"/>
    <property type="molecule type" value="mRNA"/>
</dbReference>
<dbReference type="EMBL" id="X69090">
    <property type="protein sequence ID" value="CAA48833.1"/>
    <property type="status" value="ALT_INIT"/>
    <property type="molecule type" value="mRNA"/>
</dbReference>
<dbReference type="CCDS" id="CCDS45823.1">
    <molecule id="P52179-2"/>
</dbReference>
<dbReference type="CCDS" id="CCDS45824.1">
    <molecule id="P52179-1"/>
</dbReference>
<dbReference type="PIR" id="S42167">
    <property type="entry name" value="S42167"/>
</dbReference>
<dbReference type="RefSeq" id="NP_003794.3">
    <molecule id="P52179-1"/>
    <property type="nucleotide sequence ID" value="NM_003803.3"/>
</dbReference>
<dbReference type="RefSeq" id="NP_062830.1">
    <molecule id="P52179-2"/>
    <property type="nucleotide sequence ID" value="NM_019856.2"/>
</dbReference>
<dbReference type="RefSeq" id="XP_047293866.1">
    <molecule id="P52179-1"/>
    <property type="nucleotide sequence ID" value="XM_047437910.1"/>
</dbReference>
<dbReference type="RefSeq" id="XP_054175283.1">
    <molecule id="P52179-1"/>
    <property type="nucleotide sequence ID" value="XM_054319308.1"/>
</dbReference>
<dbReference type="PDB" id="2R15">
    <property type="method" value="X-ray"/>
    <property type="resolution" value="2.24 A"/>
    <property type="chains" value="A/B=1459-1667"/>
</dbReference>
<dbReference type="PDB" id="2Y23">
    <property type="method" value="X-ray"/>
    <property type="resolution" value="2.50 A"/>
    <property type="chains" value="A=1141-1447"/>
</dbReference>
<dbReference type="PDB" id="2Y25">
    <property type="method" value="X-ray"/>
    <property type="resolution" value="3.50 A"/>
    <property type="chains" value="A/B/C/D=1357-1667"/>
</dbReference>
<dbReference type="PDB" id="3RBS">
    <property type="method" value="X-ray"/>
    <property type="resolution" value="1.85 A"/>
    <property type="chains" value="A=1247-1447"/>
</dbReference>
<dbReference type="PDB" id="5FM4">
    <property type="method" value="X-ray"/>
    <property type="resolution" value="2.80 A"/>
    <property type="chains" value="A/B/C/D/E/F=510-618"/>
</dbReference>
<dbReference type="PDB" id="5FM5">
    <property type="method" value="X-ray"/>
    <property type="resolution" value="3.10 A"/>
    <property type="chains" value="M/N=510-739"/>
</dbReference>
<dbReference type="PDB" id="5FM8">
    <property type="method" value="X-ray"/>
    <property type="resolution" value="2.05 A"/>
    <property type="chains" value="A/B/C/D=510-618"/>
</dbReference>
<dbReference type="PDB" id="6T3O">
    <property type="method" value="X-ray"/>
    <property type="resolution" value="1.80 A"/>
    <property type="chains" value="A=1247-1357"/>
</dbReference>
<dbReference type="PDB" id="6ZVA">
    <property type="method" value="X-ray"/>
    <property type="resolution" value="2.68 A"/>
    <property type="chains" value="A/B=632-735"/>
</dbReference>
<dbReference type="PDBsum" id="2R15"/>
<dbReference type="PDBsum" id="2Y23"/>
<dbReference type="PDBsum" id="2Y25"/>
<dbReference type="PDBsum" id="3RBS"/>
<dbReference type="PDBsum" id="5FM4"/>
<dbReference type="PDBsum" id="5FM5"/>
<dbReference type="PDBsum" id="5FM8"/>
<dbReference type="PDBsum" id="6T3O"/>
<dbReference type="PDBsum" id="6ZVA"/>
<dbReference type="SASBDB" id="P52179"/>
<dbReference type="SMR" id="P52179"/>
<dbReference type="BioGRID" id="114273">
    <property type="interactions" value="22"/>
</dbReference>
<dbReference type="CORUM" id="P52179"/>
<dbReference type="DIP" id="DIP-59649N"/>
<dbReference type="FunCoup" id="P52179">
    <property type="interactions" value="32"/>
</dbReference>
<dbReference type="IntAct" id="P52179">
    <property type="interactions" value="19"/>
</dbReference>
<dbReference type="MINT" id="P52179"/>
<dbReference type="STRING" id="9606.ENSP00000348821"/>
<dbReference type="CarbonylDB" id="P52179"/>
<dbReference type="GlyGen" id="P52179">
    <property type="glycosylation" value="3 sites, 1 O-linked glycan (3 sites)"/>
</dbReference>
<dbReference type="iPTMnet" id="P52179"/>
<dbReference type="PhosphoSitePlus" id="P52179"/>
<dbReference type="BioMuta" id="MYOM1"/>
<dbReference type="DMDM" id="212276443"/>
<dbReference type="jPOST" id="P52179"/>
<dbReference type="MassIVE" id="P52179"/>
<dbReference type="PaxDb" id="9606-ENSP00000348821"/>
<dbReference type="PeptideAtlas" id="P52179"/>
<dbReference type="ProteomicsDB" id="56469">
    <molecule id="P52179-1"/>
</dbReference>
<dbReference type="ProteomicsDB" id="56470">
    <molecule id="P52179-2"/>
</dbReference>
<dbReference type="Antibodypedia" id="2827">
    <property type="antibodies" value="167 antibodies from 28 providers"/>
</dbReference>
<dbReference type="DNASU" id="8736"/>
<dbReference type="Ensembl" id="ENST00000261606.11">
    <molecule id="P52179-2"/>
    <property type="protein sequence ID" value="ENSP00000261606.7"/>
    <property type="gene ID" value="ENSG00000101605.14"/>
</dbReference>
<dbReference type="Ensembl" id="ENST00000356443.9">
    <molecule id="P52179-1"/>
    <property type="protein sequence ID" value="ENSP00000348821.4"/>
    <property type="gene ID" value="ENSG00000101605.14"/>
</dbReference>
<dbReference type="GeneID" id="8736"/>
<dbReference type="KEGG" id="hsa:8736"/>
<dbReference type="MANE-Select" id="ENST00000356443.9">
    <property type="protein sequence ID" value="ENSP00000348821.4"/>
    <property type="RefSeq nucleotide sequence ID" value="NM_003803.4"/>
    <property type="RefSeq protein sequence ID" value="NP_003794.3"/>
</dbReference>
<dbReference type="UCSC" id="uc002klp.3">
    <molecule id="P52179-1"/>
    <property type="organism name" value="human"/>
</dbReference>
<dbReference type="AGR" id="HGNC:7613"/>
<dbReference type="CTD" id="8736"/>
<dbReference type="DisGeNET" id="8736"/>
<dbReference type="GeneCards" id="MYOM1"/>
<dbReference type="HGNC" id="HGNC:7613">
    <property type="gene designation" value="MYOM1"/>
</dbReference>
<dbReference type="HPA" id="ENSG00000101605">
    <property type="expression patterns" value="Group enriched (heart muscle, skeletal muscle, tongue)"/>
</dbReference>
<dbReference type="MalaCards" id="MYOM1"/>
<dbReference type="MIM" id="603508">
    <property type="type" value="gene"/>
</dbReference>
<dbReference type="neXtProt" id="NX_P52179"/>
<dbReference type="OpenTargets" id="ENSG00000101605"/>
<dbReference type="PharmGKB" id="PA31418"/>
<dbReference type="VEuPathDB" id="HostDB:ENSG00000101605"/>
<dbReference type="eggNOG" id="KOG0613">
    <property type="taxonomic scope" value="Eukaryota"/>
</dbReference>
<dbReference type="GeneTree" id="ENSGT00940000154982"/>
<dbReference type="InParanoid" id="P52179"/>
<dbReference type="OMA" id="ECVLLMF"/>
<dbReference type="OrthoDB" id="8776562at2759"/>
<dbReference type="PAN-GO" id="P52179">
    <property type="GO annotations" value="4 GO annotations based on evolutionary models"/>
</dbReference>
<dbReference type="PhylomeDB" id="P52179"/>
<dbReference type="TreeFam" id="TF331825"/>
<dbReference type="PathwayCommons" id="P52179"/>
<dbReference type="SignaLink" id="P52179"/>
<dbReference type="SIGNOR" id="P52179"/>
<dbReference type="BioGRID-ORCS" id="8736">
    <property type="hits" value="7 hits in 1145 CRISPR screens"/>
</dbReference>
<dbReference type="ChiTaRS" id="MYOM1">
    <property type="organism name" value="human"/>
</dbReference>
<dbReference type="EvolutionaryTrace" id="P52179"/>
<dbReference type="GeneWiki" id="MYOM1"/>
<dbReference type="GenomeRNAi" id="8736"/>
<dbReference type="Pharos" id="P52179">
    <property type="development level" value="Tbio"/>
</dbReference>
<dbReference type="PRO" id="PR:P52179"/>
<dbReference type="Proteomes" id="UP000005640">
    <property type="component" value="Chromosome 18"/>
</dbReference>
<dbReference type="RNAct" id="P52179">
    <property type="molecule type" value="protein"/>
</dbReference>
<dbReference type="Bgee" id="ENSG00000101605">
    <property type="expression patterns" value="Expressed in hindlimb stylopod muscle and 134 other cell types or tissues"/>
</dbReference>
<dbReference type="ExpressionAtlas" id="P52179">
    <property type="expression patterns" value="baseline and differential"/>
</dbReference>
<dbReference type="GO" id="GO:0031430">
    <property type="term" value="C:M band"/>
    <property type="evidence" value="ECO:0000250"/>
    <property type="project" value="UniProtKB"/>
</dbReference>
<dbReference type="GO" id="GO:0005863">
    <property type="term" value="C:striated muscle myosin thick filament"/>
    <property type="evidence" value="ECO:0000304"/>
    <property type="project" value="ProtInc"/>
</dbReference>
<dbReference type="GO" id="GO:0042802">
    <property type="term" value="F:identical protein binding"/>
    <property type="evidence" value="ECO:0000353"/>
    <property type="project" value="IntAct"/>
</dbReference>
<dbReference type="GO" id="GO:0019900">
    <property type="term" value="F:kinase binding"/>
    <property type="evidence" value="ECO:0000353"/>
    <property type="project" value="CAFA"/>
</dbReference>
<dbReference type="GO" id="GO:0042803">
    <property type="term" value="F:protein homodimerization activity"/>
    <property type="evidence" value="ECO:0000250"/>
    <property type="project" value="UniProtKB"/>
</dbReference>
<dbReference type="GO" id="GO:0008307">
    <property type="term" value="F:structural constituent of muscle"/>
    <property type="evidence" value="ECO:0000304"/>
    <property type="project" value="ProtInc"/>
</dbReference>
<dbReference type="GO" id="GO:0002074">
    <property type="term" value="P:extraocular skeletal muscle development"/>
    <property type="evidence" value="ECO:0007669"/>
    <property type="project" value="Ensembl"/>
</dbReference>
<dbReference type="GO" id="GO:0010628">
    <property type="term" value="P:positive regulation of gene expression"/>
    <property type="evidence" value="ECO:0000315"/>
    <property type="project" value="CAFA"/>
</dbReference>
<dbReference type="GO" id="GO:0050714">
    <property type="term" value="P:positive regulation of protein secretion"/>
    <property type="evidence" value="ECO:0000315"/>
    <property type="project" value="CAFA"/>
</dbReference>
<dbReference type="GO" id="GO:0010737">
    <property type="term" value="P:protein kinase A signaling"/>
    <property type="evidence" value="ECO:0000315"/>
    <property type="project" value="CAFA"/>
</dbReference>
<dbReference type="GO" id="GO:0045214">
    <property type="term" value="P:sarcomere organization"/>
    <property type="evidence" value="ECO:0000318"/>
    <property type="project" value="GO_Central"/>
</dbReference>
<dbReference type="CDD" id="cd00063">
    <property type="entry name" value="FN3"/>
    <property type="match status" value="5"/>
</dbReference>
<dbReference type="CDD" id="cd00096">
    <property type="entry name" value="Ig"/>
    <property type="match status" value="1"/>
</dbReference>
<dbReference type="CDD" id="cd05737">
    <property type="entry name" value="IgI_Myomesin_like_C"/>
    <property type="match status" value="1"/>
</dbReference>
<dbReference type="CDD" id="cd20951">
    <property type="entry name" value="IgI_titin_I1-like"/>
    <property type="match status" value="1"/>
</dbReference>
<dbReference type="DisProt" id="DP00517"/>
<dbReference type="FunFam" id="2.60.40.10:FF:000069">
    <property type="entry name" value="Alpha-protein kinase 3"/>
    <property type="match status" value="1"/>
</dbReference>
<dbReference type="FunFam" id="2.60.40.10:FF:000029">
    <property type="entry name" value="Myomesin 1"/>
    <property type="match status" value="1"/>
</dbReference>
<dbReference type="FunFam" id="2.60.40.10:FF:000124">
    <property type="entry name" value="Myomesin 1"/>
    <property type="match status" value="1"/>
</dbReference>
<dbReference type="FunFam" id="2.60.40.10:FF:000134">
    <property type="entry name" value="Myomesin 1"/>
    <property type="match status" value="1"/>
</dbReference>
<dbReference type="FunFam" id="2.60.40.10:FF:000192">
    <property type="entry name" value="Myomesin 1"/>
    <property type="match status" value="1"/>
</dbReference>
<dbReference type="FunFam" id="2.60.40.10:FF:000197">
    <property type="entry name" value="Myomesin 1"/>
    <property type="match status" value="1"/>
</dbReference>
<dbReference type="FunFam" id="2.60.40.10:FF:000222">
    <property type="entry name" value="Myomesin 1"/>
    <property type="match status" value="1"/>
</dbReference>
<dbReference type="FunFam" id="2.60.40.10:FF:000233">
    <property type="entry name" value="Myomesin 1"/>
    <property type="match status" value="1"/>
</dbReference>
<dbReference type="FunFam" id="2.60.40.10:FF:000467">
    <property type="entry name" value="Myomesin 1"/>
    <property type="match status" value="1"/>
</dbReference>
<dbReference type="FunFam" id="2.60.40.10:FF:002172">
    <property type="entry name" value="Myomesin 1a (skelemin)"/>
    <property type="match status" value="2"/>
</dbReference>
<dbReference type="FunFam" id="2.60.40.10:FF:000179">
    <property type="entry name" value="Myomesin 2"/>
    <property type="match status" value="1"/>
</dbReference>
<dbReference type="Gene3D" id="2.60.40.10">
    <property type="entry name" value="Immunoglobulins"/>
    <property type="match status" value="12"/>
</dbReference>
<dbReference type="InterPro" id="IPR003961">
    <property type="entry name" value="FN3_dom"/>
</dbReference>
<dbReference type="InterPro" id="IPR036116">
    <property type="entry name" value="FN3_sf"/>
</dbReference>
<dbReference type="InterPro" id="IPR007110">
    <property type="entry name" value="Ig-like_dom"/>
</dbReference>
<dbReference type="InterPro" id="IPR036179">
    <property type="entry name" value="Ig-like_dom_sf"/>
</dbReference>
<dbReference type="InterPro" id="IPR013783">
    <property type="entry name" value="Ig-like_fold"/>
</dbReference>
<dbReference type="InterPro" id="IPR013098">
    <property type="entry name" value="Ig_I-set"/>
</dbReference>
<dbReference type="InterPro" id="IPR003599">
    <property type="entry name" value="Ig_sub"/>
</dbReference>
<dbReference type="InterPro" id="IPR003598">
    <property type="entry name" value="Ig_sub2"/>
</dbReference>
<dbReference type="InterPro" id="IPR050964">
    <property type="entry name" value="Striated_Muscle_Regulatory"/>
</dbReference>
<dbReference type="PANTHER" id="PTHR13817:SF16">
    <property type="entry name" value="MYOMESIN-1"/>
    <property type="match status" value="1"/>
</dbReference>
<dbReference type="PANTHER" id="PTHR13817">
    <property type="entry name" value="TITIN"/>
    <property type="match status" value="1"/>
</dbReference>
<dbReference type="Pfam" id="PF00041">
    <property type="entry name" value="fn3"/>
    <property type="match status" value="5"/>
</dbReference>
<dbReference type="Pfam" id="PF07679">
    <property type="entry name" value="I-set"/>
    <property type="match status" value="5"/>
</dbReference>
<dbReference type="PRINTS" id="PR00014">
    <property type="entry name" value="FNTYPEIII"/>
</dbReference>
<dbReference type="SMART" id="SM00060">
    <property type="entry name" value="FN3"/>
    <property type="match status" value="5"/>
</dbReference>
<dbReference type="SMART" id="SM00409">
    <property type="entry name" value="IG"/>
    <property type="match status" value="6"/>
</dbReference>
<dbReference type="SMART" id="SM00408">
    <property type="entry name" value="IGc2"/>
    <property type="match status" value="5"/>
</dbReference>
<dbReference type="SUPFAM" id="SSF49265">
    <property type="entry name" value="Fibronectin type III"/>
    <property type="match status" value="3"/>
</dbReference>
<dbReference type="SUPFAM" id="SSF48726">
    <property type="entry name" value="Immunoglobulin"/>
    <property type="match status" value="7"/>
</dbReference>
<dbReference type="PROSITE" id="PS50853">
    <property type="entry name" value="FN3"/>
    <property type="match status" value="5"/>
</dbReference>
<dbReference type="PROSITE" id="PS50835">
    <property type="entry name" value="IG_LIKE"/>
    <property type="match status" value="5"/>
</dbReference>
<keyword id="KW-0002">3D-structure</keyword>
<keyword id="KW-0025">Alternative splicing</keyword>
<keyword id="KW-0963">Cytoplasm</keyword>
<keyword id="KW-1015">Disulfide bond</keyword>
<keyword id="KW-0393">Immunoglobulin domain</keyword>
<keyword id="KW-0514">Muscle protein</keyword>
<keyword id="KW-0597">Phosphoprotein</keyword>
<keyword id="KW-1267">Proteomics identification</keyword>
<keyword id="KW-1185">Reference proteome</keyword>
<keyword id="KW-0677">Repeat</keyword>
<keyword id="KW-0787">Thick filament</keyword>
<gene>
    <name type="primary">MYOM1</name>
</gene>
<sequence>MSLPFYQRCHQHYDLSYRNKDVRSTVSHYQREKKRSAVYTQGSTAYSSRSSAAHRRESEAFRRASASSSQQQASQHALSSEVSRKAASAYDYGSSHGLTDSSLLLDDYSSKLSPKPKRAKHSLLSGEEKENLPSDYMVPIFSGRQKHVSGITDTEEERIKEAAAYIAQRNLLASEEGITTSKQSTASKQTTASKQSTASKQSTASKQSTASRQSTASRQSVVSKQATSALQQEETSEKKSRKVVIREKAERLSLRKTLEETETYHAKLNEDHLLHAPEFIIKPRSHTVWEKENVKLHCSIAGWPEPRVTWYKNQVPINVHANPGKYIIESRYGMHTLEINGCDFEDTAQYRASAMNVKGELSAYASVVVKRYKGEFDETRFHAGASTMPLSFGVTPYGYASRFEIHFDDKFDVSFGREGETMSLGCRVVITPEIKHFQPEIQWYRNGVPLSPSKWVQTLWSGERATLTFSHLNKEDEGLYTIRVRMGEYYEQYSAYVFVRDADAEIEGAPAAPLDVKCLEANKDYIIISWKQPAVDGGSPILGYFIDKCEVGTDSWSQCNDTPVKFARFPVTGLIEGRSYIFRVRAVNKMGIGFPSRVSEPVAALDPAEKARLKSRPSAPWTGQIIVTEEEPSEGIVPGPPTDLSVTEATRSYVVLSWKPPGQRGHEGIMYFVEKCEAGTENWQRVNTELPVKSPRFALFDLAEGKSYCFRVRCSNSAGVGEPSEATEVTVVGDKLDIPKAPGKIIPSRNTDTSVVVSWEESKDAKELVGYYIEASVAGSGKWEPCNNNPVKGSRFTCHGLVTGQSYIFRVRAVNAAGLSEYSQDSEAIEVKAAIGGGVSPDVCPALSDEPGGLTASRGRVHEASPPTFQKDALLGSKPNKPSLPSSSQNLGQTEVSKVSETVQEELTPPPQKAAPQGKSKSDPLKKKTDRAPPSPPCDITCLESFRDSMVLGWKQPDKIGGAEITGYYVNYREVIDGVPGKWREANVKAVSEEAYKISNLKENMVYQFQVAAMNMAGLGAPSAVSECFKCEEWTIAVPGPPHSLKCSEVRKDSLVLQWKPPVHSGRTPVTGYFVDLKEAKAKEDQWRGLNEAAIKNVYLKVRGLKEGVSYVFRVRAINQAGVGKPSDLAGPVVAETRPGTKEVVVNVDDDGVISLNFECDKMTPKSEFSWSKDYVSTEDSPRLEVESKGNKTKMTFKDLGMDDLGIYSCDVTDTDGIASSYLIDEEELKRLLALSHEHKFPTVPVKSELAVEILEKGQVRFWMQAEKLSGNAKVNYIFNEKEIFEGPKYKMHIDRNTGIIEMFMEKLQDEDEGTYTFQLQDGKATNHSTVVLVGDVFKKLQKEAEFQRQEWIRKQGPHFVEYLSWEVTGECNVLLKCKVANIKKETHIVWYKDEREISVDEKHDFKDGICTLLITEFSKKDAGIYEVILKDDRGKDKSRLKLVDEAFKELMMEVCKKIALSATDLKIQSTAEGIQLYSFVTYYVEDLKVNWSHNGSAIRYSDRVKTGVTGEQIWLQINEPTPNDKGKYVMELFDGKTGHQKTVDLSGQAYDEAYAEFQRLKQAAIAEKNRARVLGGLPDVVTIQEGKALNLTCNVWGDPPPEVSWLKNEKALASDDHCNLKFEAGRTAYFTINGVSTADSGKYGLVVKNKYGSETSDFTVSVFIPEEEARMAALESLKGGKKAK</sequence>
<proteinExistence type="evidence at protein level"/>
<evidence type="ECO:0000250" key="1"/>
<evidence type="ECO:0000250" key="2">
    <source>
        <dbReference type="UniProtKB" id="Q62234"/>
    </source>
</evidence>
<evidence type="ECO:0000255" key="3">
    <source>
        <dbReference type="PROSITE-ProRule" id="PRU00114"/>
    </source>
</evidence>
<evidence type="ECO:0000255" key="4">
    <source>
        <dbReference type="PROSITE-ProRule" id="PRU00316"/>
    </source>
</evidence>
<evidence type="ECO:0000256" key="5">
    <source>
        <dbReference type="SAM" id="MobiDB-lite"/>
    </source>
</evidence>
<evidence type="ECO:0000269" key="6">
    <source>
    </source>
</evidence>
<evidence type="ECO:0000269" key="7">
    <source>
    </source>
</evidence>
<evidence type="ECO:0000269" key="8">
    <source>
    </source>
</evidence>
<evidence type="ECO:0000269" key="9">
    <source>
    </source>
</evidence>
<evidence type="ECO:0000269" key="10">
    <source ref="1"/>
</evidence>
<evidence type="ECO:0000303" key="11">
    <source>
    </source>
</evidence>
<evidence type="ECO:0000303" key="12">
    <source>
    </source>
</evidence>
<evidence type="ECO:0000305" key="13"/>
<evidence type="ECO:0007829" key="14">
    <source>
        <dbReference type="PDB" id="2R15"/>
    </source>
</evidence>
<evidence type="ECO:0007829" key="15">
    <source>
        <dbReference type="PDB" id="2Y23"/>
    </source>
</evidence>
<evidence type="ECO:0007829" key="16">
    <source>
        <dbReference type="PDB" id="2Y25"/>
    </source>
</evidence>
<evidence type="ECO:0007829" key="17">
    <source>
        <dbReference type="PDB" id="3RBS"/>
    </source>
</evidence>
<evidence type="ECO:0007829" key="18">
    <source>
        <dbReference type="PDB" id="5FM4"/>
    </source>
</evidence>
<evidence type="ECO:0007829" key="19">
    <source>
        <dbReference type="PDB" id="5FM5"/>
    </source>
</evidence>
<evidence type="ECO:0007829" key="20">
    <source>
        <dbReference type="PDB" id="5FM8"/>
    </source>
</evidence>
<evidence type="ECO:0007829" key="21">
    <source>
        <dbReference type="PDB" id="6T3O"/>
    </source>
</evidence>
<evidence type="ECO:0007829" key="22">
    <source>
        <dbReference type="PDB" id="6ZVA"/>
    </source>
</evidence>
<organism>
    <name type="scientific">Homo sapiens</name>
    <name type="common">Human</name>
    <dbReference type="NCBI Taxonomy" id="9606"/>
    <lineage>
        <taxon>Eukaryota</taxon>
        <taxon>Metazoa</taxon>
        <taxon>Chordata</taxon>
        <taxon>Craniata</taxon>
        <taxon>Vertebrata</taxon>
        <taxon>Euteleostomi</taxon>
        <taxon>Mammalia</taxon>
        <taxon>Eutheria</taxon>
        <taxon>Euarchontoglires</taxon>
        <taxon>Primates</taxon>
        <taxon>Haplorrhini</taxon>
        <taxon>Catarrhini</taxon>
        <taxon>Hominidae</taxon>
        <taxon>Homo</taxon>
    </lineage>
</organism>
<feature type="chain" id="PRO_0000072684" description="Myomesin-1">
    <location>
        <begin position="1"/>
        <end position="1685"/>
    </location>
</feature>
<feature type="repeat" description="1">
    <location>
        <begin position="182"/>
        <end position="187"/>
    </location>
</feature>
<feature type="repeat" description="2">
    <location>
        <begin position="188"/>
        <end position="193"/>
    </location>
</feature>
<feature type="repeat" description="3">
    <location>
        <begin position="194"/>
        <end position="199"/>
    </location>
</feature>
<feature type="repeat" description="4">
    <location>
        <begin position="200"/>
        <end position="205"/>
    </location>
</feature>
<feature type="repeat" description="5">
    <location>
        <begin position="206"/>
        <end position="211"/>
    </location>
</feature>
<feature type="repeat" description="6">
    <location>
        <begin position="212"/>
        <end position="217"/>
    </location>
</feature>
<feature type="domain" description="Ig-like C2-type 1">
    <location>
        <begin position="277"/>
        <end position="368"/>
    </location>
</feature>
<feature type="domain" description="Ig-like C2-type 2">
    <location>
        <begin position="396"/>
        <end position="498"/>
    </location>
</feature>
<feature type="domain" description="Fibronectin type-III 1" evidence="4">
    <location>
        <begin position="512"/>
        <end position="607"/>
    </location>
</feature>
<feature type="domain" description="Fibronectin type-III 2" evidence="4">
    <location>
        <begin position="640"/>
        <end position="734"/>
    </location>
</feature>
<feature type="domain" description="Fibronectin type-III 3" evidence="4">
    <location>
        <begin position="741"/>
        <end position="834"/>
    </location>
</feature>
<feature type="domain" description="Fibronectin type-III 4" evidence="4">
    <location>
        <begin position="933"/>
        <end position="1034"/>
    </location>
</feature>
<feature type="domain" description="Fibronectin type-III 5" evidence="4">
    <location>
        <begin position="1041"/>
        <end position="1140"/>
    </location>
</feature>
<feature type="domain" description="Ig-like C2-type 3">
    <location>
        <begin position="1132"/>
        <end position="1230"/>
    </location>
</feature>
<feature type="domain" description="Ig-like C2-type 4">
    <location>
        <begin position="1358"/>
        <end position="1444"/>
    </location>
</feature>
<feature type="domain" description="Ig-like C2-type 5">
    <location>
        <begin position="1573"/>
        <end position="1662"/>
    </location>
</feature>
<feature type="region of interest" description="Disordered" evidence="5">
    <location>
        <begin position="33"/>
        <end position="80"/>
    </location>
</feature>
<feature type="region of interest" description="Disordered" evidence="5">
    <location>
        <begin position="177"/>
        <end position="244"/>
    </location>
</feature>
<feature type="region of interest" description="6 X 6 AA tandem repeats">
    <location>
        <begin position="182"/>
        <end position="217"/>
    </location>
</feature>
<feature type="region of interest" description="Disordered" evidence="5">
    <location>
        <begin position="840"/>
        <end position="938"/>
    </location>
</feature>
<feature type="compositionally biased region" description="Low complexity" evidence="5">
    <location>
        <begin position="41"/>
        <end position="51"/>
    </location>
</feature>
<feature type="compositionally biased region" description="Low complexity" evidence="5">
    <location>
        <begin position="63"/>
        <end position="80"/>
    </location>
</feature>
<feature type="compositionally biased region" description="Low complexity" evidence="5">
    <location>
        <begin position="179"/>
        <end position="220"/>
    </location>
</feature>
<feature type="compositionally biased region" description="Polar residues" evidence="5">
    <location>
        <begin position="221"/>
        <end position="233"/>
    </location>
</feature>
<feature type="compositionally biased region" description="Low complexity" evidence="5">
    <location>
        <begin position="874"/>
        <end position="888"/>
    </location>
</feature>
<feature type="compositionally biased region" description="Polar residues" evidence="5">
    <location>
        <begin position="889"/>
        <end position="902"/>
    </location>
</feature>
<feature type="compositionally biased region" description="Basic and acidic residues" evidence="5">
    <location>
        <begin position="920"/>
        <end position="931"/>
    </location>
</feature>
<feature type="modified residue" description="Phosphoserine" evidence="2">
    <location>
        <position position="113"/>
    </location>
</feature>
<feature type="modified residue" description="Phosphoserine" evidence="2">
    <location>
        <position position="883"/>
    </location>
</feature>
<feature type="modified residue" description="Phosphoserine" evidence="2">
    <location>
        <position position="887"/>
    </location>
</feature>
<feature type="modified residue" description="Phosphoserine" evidence="2">
    <location>
        <position position="1054"/>
    </location>
</feature>
<feature type="disulfide bond" evidence="3">
    <location>
        <begin position="1160"/>
        <end position="1210"/>
    </location>
</feature>
<feature type="splice variant" id="VSP_035663" description="In isoform 2." evidence="11 12">
    <location>
        <begin position="836"/>
        <end position="931"/>
    </location>
</feature>
<feature type="sequence variant" id="VAR_047221" description="In dbSNP:rs1791085.">
    <original>V</original>
    <variation>L</variation>
    <location>
        <position position="22"/>
    </location>
</feature>
<feature type="sequence variant" id="VAR_047222" description="In dbSNP:rs1962519." evidence="6 8 9">
    <original>S</original>
    <variation>P</variation>
    <location>
        <position position="181"/>
    </location>
</feature>
<feature type="sequence variant" id="VAR_047223" description="In dbSNP:rs2230165.">
    <original>T</original>
    <variation>M</variation>
    <location>
        <position position="215"/>
    </location>
</feature>
<feature type="sequence variant" id="VAR_047224" description="In dbSNP:rs8099021." evidence="6 8 9 10">
    <original>G</original>
    <variation>A</variation>
    <location>
        <position position="341"/>
    </location>
</feature>
<feature type="sequence variant" id="VAR_047225" description="In dbSNP:rs9807556.">
    <original>E</original>
    <variation>V</variation>
    <location>
        <position position="600"/>
    </location>
</feature>
<feature type="sequence variant" id="VAR_047226" description="In dbSNP:rs1071600." evidence="6 9 10">
    <original>I</original>
    <variation>T</variation>
    <location>
        <position position="960"/>
    </location>
</feature>
<feature type="sequence variant" id="VAR_047227" description="In dbSNP:rs3765623.">
    <original>D</original>
    <variation>N</variation>
    <location>
        <position position="1408"/>
    </location>
</feature>
<feature type="sequence variant" id="VAR_047228" description="In dbSNP:rs16944397.">
    <original>M</original>
    <variation>T</variation>
    <location>
        <position position="1453"/>
    </location>
</feature>
<feature type="sequence conflict" description="In Ref. 5; CAA48833." evidence="13" ref="5">
    <original>E</original>
    <variation>G</variation>
    <location>
        <position position="247"/>
    </location>
</feature>
<feature type="sequence conflict" description="In Ref. 5; CAA48833." evidence="13" ref="5">
    <original>Q</original>
    <variation>R</variation>
    <location>
        <position position="442"/>
    </location>
</feature>
<feature type="sequence conflict" description="In Ref. 4; AAI16184." evidence="13" ref="4">
    <original>S</original>
    <variation>F</variation>
    <location>
        <position position="599"/>
    </location>
</feature>
<feature type="sequence conflict" description="In Ref. 5; CAA48833." evidence="13" ref="5">
    <original>P</original>
    <variation>A</variation>
    <location>
        <position position="601"/>
    </location>
</feature>
<feature type="sequence conflict" description="In Ref. 4; AAI16184." evidence="13" ref="4">
    <original>S</original>
    <variation>G</variation>
    <location>
        <position position="615"/>
    </location>
</feature>
<feature type="sequence conflict" description="In Ref. 5; CAA48833." evidence="13" ref="5">
    <original>RPSAPWTGQI</original>
    <variation>PLSTLDWTV</variation>
    <location>
        <begin position="616"/>
        <end position="625"/>
    </location>
</feature>
<feature type="sequence conflict" description="In Ref. 5; CAA48833." evidence="13" ref="5">
    <original>S</original>
    <variation>N</variation>
    <location>
        <position position="776"/>
    </location>
</feature>
<feature type="sequence conflict" description="In Ref. 5; CAA48833." evidence="13" ref="5">
    <original>GS</original>
    <variation>TH</variation>
    <location>
        <begin position="793"/>
        <end position="794"/>
    </location>
</feature>
<feature type="sequence conflict" description="In Ref. 5; CAA48833." evidence="13" ref="5">
    <original>S</original>
    <variation>R</variation>
    <location>
        <position position="992"/>
    </location>
</feature>
<feature type="sequence conflict" description="In Ref. 2; BAC86128." evidence="13" ref="2">
    <original>L</original>
    <variation>S</variation>
    <location>
        <position position="1001"/>
    </location>
</feature>
<feature type="sequence conflict" description="In Ref. 5; CAA48833." evidence="13" ref="5">
    <location>
        <position position="1080"/>
    </location>
</feature>
<feature type="sequence conflict" description="In Ref. 5; CAA48833." evidence="13" ref="5">
    <original>T</original>
    <variation>R</variation>
    <location>
        <position position="1141"/>
    </location>
</feature>
<feature type="sequence conflict" description="In Ref. 5; CAA48833." evidence="13" ref="5">
    <original>SD</original>
    <variation>QT</variation>
    <location>
        <begin position="1615"/>
        <end position="1616"/>
    </location>
</feature>
<feature type="sequence conflict" description="In Ref. 2; BAC86128." evidence="13" ref="2">
    <original>D</original>
    <variation>G</variation>
    <location>
        <position position="1617"/>
    </location>
</feature>
<feature type="strand" evidence="20">
    <location>
        <begin position="514"/>
        <end position="521"/>
    </location>
</feature>
<feature type="strand" evidence="20">
    <location>
        <begin position="526"/>
        <end position="531"/>
    </location>
</feature>
<feature type="strand" evidence="20">
    <location>
        <begin position="543"/>
        <end position="550"/>
    </location>
</feature>
<feature type="strand" evidence="20">
    <location>
        <begin position="556"/>
        <end position="559"/>
    </location>
</feature>
<feature type="strand" evidence="20">
    <location>
        <begin position="564"/>
        <end position="571"/>
    </location>
</feature>
<feature type="strand" evidence="20">
    <location>
        <begin position="579"/>
        <end position="588"/>
    </location>
</feature>
<feature type="strand" evidence="19">
    <location>
        <begin position="591"/>
        <end position="595"/>
    </location>
</feature>
<feature type="helix" evidence="18">
    <location>
        <begin position="609"/>
        <end position="612"/>
    </location>
</feature>
<feature type="strand" evidence="19">
    <location>
        <begin position="626"/>
        <end position="630"/>
    </location>
</feature>
<feature type="strand" evidence="22">
    <location>
        <begin position="642"/>
        <end position="659"/>
    </location>
</feature>
<feature type="strand" evidence="22">
    <location>
        <begin position="670"/>
        <end position="679"/>
    </location>
</feature>
<feature type="strand" evidence="22">
    <location>
        <begin position="694"/>
        <end position="700"/>
    </location>
</feature>
<feature type="strand" evidence="22">
    <location>
        <begin position="707"/>
        <end position="715"/>
    </location>
</feature>
<feature type="strand" evidence="22">
    <location>
        <begin position="727"/>
        <end position="730"/>
    </location>
</feature>
<feature type="strand" evidence="15">
    <location>
        <begin position="1145"/>
        <end position="1148"/>
    </location>
</feature>
<feature type="strand" evidence="15">
    <location>
        <begin position="1154"/>
        <end position="1159"/>
    </location>
</feature>
<feature type="strand" evidence="15">
    <location>
        <begin position="1169"/>
        <end position="1173"/>
    </location>
</feature>
<feature type="strand" evidence="15">
    <location>
        <begin position="1184"/>
        <end position="1189"/>
    </location>
</feature>
<feature type="strand" evidence="15">
    <location>
        <begin position="1192"/>
        <end position="1199"/>
    </location>
</feature>
<feature type="helix" evidence="15">
    <location>
        <begin position="1202"/>
        <end position="1204"/>
    </location>
</feature>
<feature type="strand" evidence="15">
    <location>
        <begin position="1206"/>
        <end position="1215"/>
    </location>
</feature>
<feature type="strand" evidence="15">
    <location>
        <begin position="1220"/>
        <end position="1224"/>
    </location>
</feature>
<feature type="helix" evidence="15">
    <location>
        <begin position="1226"/>
        <end position="1240"/>
    </location>
</feature>
<feature type="strand" evidence="21">
    <location>
        <begin position="1248"/>
        <end position="1254"/>
    </location>
</feature>
<feature type="helix" evidence="17">
    <location>
        <begin position="1256"/>
        <end position="1258"/>
    </location>
</feature>
<feature type="strand" evidence="21">
    <location>
        <begin position="1260"/>
        <end position="1265"/>
    </location>
</feature>
<feature type="strand" evidence="21">
    <location>
        <begin position="1274"/>
        <end position="1279"/>
    </location>
</feature>
<feature type="strand" evidence="21">
    <location>
        <begin position="1282"/>
        <end position="1284"/>
    </location>
</feature>
<feature type="strand" evidence="21">
    <location>
        <begin position="1286"/>
        <end position="1289"/>
    </location>
</feature>
<feature type="strand" evidence="21">
    <location>
        <begin position="1291"/>
        <end position="1294"/>
    </location>
</feature>
<feature type="turn" evidence="21">
    <location>
        <begin position="1296"/>
        <end position="1298"/>
    </location>
</feature>
<feature type="strand" evidence="21">
    <location>
        <begin position="1300"/>
        <end position="1306"/>
    </location>
</feature>
<feature type="helix" evidence="21">
    <location>
        <begin position="1310"/>
        <end position="1312"/>
    </location>
</feature>
<feature type="strand" evidence="21">
    <location>
        <begin position="1314"/>
        <end position="1322"/>
    </location>
</feature>
<feature type="strand" evidence="21">
    <location>
        <begin position="1325"/>
        <end position="1333"/>
    </location>
</feature>
<feature type="helix" evidence="21">
    <location>
        <begin position="1336"/>
        <end position="1354"/>
    </location>
</feature>
<feature type="strand" evidence="17">
    <location>
        <begin position="1357"/>
        <end position="1369"/>
    </location>
</feature>
<feature type="turn" evidence="17">
    <location>
        <begin position="1370"/>
        <end position="1372"/>
    </location>
</feature>
<feature type="strand" evidence="17">
    <location>
        <begin position="1373"/>
        <end position="1382"/>
    </location>
</feature>
<feature type="strand" evidence="17">
    <location>
        <begin position="1388"/>
        <end position="1393"/>
    </location>
</feature>
<feature type="strand" evidence="17">
    <location>
        <begin position="1396"/>
        <end position="1398"/>
    </location>
</feature>
<feature type="strand" evidence="17">
    <location>
        <begin position="1407"/>
        <end position="1415"/>
    </location>
</feature>
<feature type="helix" evidence="17">
    <location>
        <begin position="1420"/>
        <end position="1422"/>
    </location>
</feature>
<feature type="strand" evidence="17">
    <location>
        <begin position="1424"/>
        <end position="1432"/>
    </location>
</feature>
<feature type="strand" evidence="17">
    <location>
        <begin position="1435"/>
        <end position="1443"/>
    </location>
</feature>
<feature type="helix" evidence="16">
    <location>
        <begin position="1446"/>
        <end position="1460"/>
    </location>
</feature>
<feature type="strand" evidence="14">
    <location>
        <begin position="1467"/>
        <end position="1470"/>
    </location>
</feature>
<feature type="strand" evidence="14">
    <location>
        <begin position="1472"/>
        <end position="1483"/>
    </location>
</feature>
<feature type="strand" evidence="14">
    <location>
        <begin position="1489"/>
        <end position="1494"/>
    </location>
</feature>
<feature type="strand" evidence="14">
    <location>
        <begin position="1503"/>
        <end position="1510"/>
    </location>
</feature>
<feature type="strand" evidence="14">
    <location>
        <begin position="1513"/>
        <end position="1520"/>
    </location>
</feature>
<feature type="helix" evidence="14">
    <location>
        <begin position="1523"/>
        <end position="1525"/>
    </location>
</feature>
<feature type="strand" evidence="14">
    <location>
        <begin position="1527"/>
        <end position="1534"/>
    </location>
</feature>
<feature type="strand" evidence="14">
    <location>
        <begin position="1539"/>
        <end position="1546"/>
    </location>
</feature>
<feature type="helix" evidence="14">
    <location>
        <begin position="1548"/>
        <end position="1570"/>
    </location>
</feature>
<feature type="strand" evidence="14">
    <location>
        <begin position="1573"/>
        <end position="1577"/>
    </location>
</feature>
<feature type="strand" evidence="14">
    <location>
        <begin position="1580"/>
        <end position="1585"/>
    </location>
</feature>
<feature type="strand" evidence="14">
    <location>
        <begin position="1590"/>
        <end position="1597"/>
    </location>
</feature>
<feature type="strand" evidence="14">
    <location>
        <begin position="1603"/>
        <end position="1608"/>
    </location>
</feature>
<feature type="strand" evidence="14">
    <location>
        <begin position="1611"/>
        <end position="1613"/>
    </location>
</feature>
<feature type="strand" evidence="14">
    <location>
        <begin position="1617"/>
        <end position="1624"/>
    </location>
</feature>
<feature type="turn" evidence="14">
    <location>
        <begin position="1625"/>
        <end position="1627"/>
    </location>
</feature>
<feature type="strand" evidence="14">
    <location>
        <begin position="1628"/>
        <end position="1635"/>
    </location>
</feature>
<feature type="helix" evidence="14">
    <location>
        <begin position="1638"/>
        <end position="1640"/>
    </location>
</feature>
<feature type="strand" evidence="14">
    <location>
        <begin position="1642"/>
        <end position="1650"/>
    </location>
</feature>
<feature type="strand" evidence="14">
    <location>
        <begin position="1653"/>
        <end position="1664"/>
    </location>
</feature>
<reference key="1">
    <citation type="submission" date="2004-01" db="EMBL/GenBank/DDBJ databases">
        <title>SUMO modification of the M-band protein myomesin.</title>
        <authorList>
            <person name="Hayess K."/>
            <person name="Matschke K."/>
            <person name="Fuerst D.O."/>
        </authorList>
    </citation>
    <scope>NUCLEOTIDE SEQUENCE [MRNA] (ISOFORM 1)</scope>
    <scope>VARIANTS ALA-341 AND THR-960</scope>
    <source>
        <tissue>Skeletal muscle</tissue>
    </source>
</reference>
<reference key="2">
    <citation type="journal article" date="2004" name="Nat. Genet.">
        <title>Complete sequencing and characterization of 21,243 full-length human cDNAs.</title>
        <authorList>
            <person name="Ota T."/>
            <person name="Suzuki Y."/>
            <person name="Nishikawa T."/>
            <person name="Otsuki T."/>
            <person name="Sugiyama T."/>
            <person name="Irie R."/>
            <person name="Wakamatsu A."/>
            <person name="Hayashi K."/>
            <person name="Sato H."/>
            <person name="Nagai K."/>
            <person name="Kimura K."/>
            <person name="Makita H."/>
            <person name="Sekine M."/>
            <person name="Obayashi M."/>
            <person name="Nishi T."/>
            <person name="Shibahara T."/>
            <person name="Tanaka T."/>
            <person name="Ishii S."/>
            <person name="Yamamoto J."/>
            <person name="Saito K."/>
            <person name="Kawai Y."/>
            <person name="Isono Y."/>
            <person name="Nakamura Y."/>
            <person name="Nagahari K."/>
            <person name="Murakami K."/>
            <person name="Yasuda T."/>
            <person name="Iwayanagi T."/>
            <person name="Wagatsuma M."/>
            <person name="Shiratori A."/>
            <person name="Sudo H."/>
            <person name="Hosoiri T."/>
            <person name="Kaku Y."/>
            <person name="Kodaira H."/>
            <person name="Kondo H."/>
            <person name="Sugawara M."/>
            <person name="Takahashi M."/>
            <person name="Kanda K."/>
            <person name="Yokoi T."/>
            <person name="Furuya T."/>
            <person name="Kikkawa E."/>
            <person name="Omura Y."/>
            <person name="Abe K."/>
            <person name="Kamihara K."/>
            <person name="Katsuta N."/>
            <person name="Sato K."/>
            <person name="Tanikawa M."/>
            <person name="Yamazaki M."/>
            <person name="Ninomiya K."/>
            <person name="Ishibashi T."/>
            <person name="Yamashita H."/>
            <person name="Murakawa K."/>
            <person name="Fujimori K."/>
            <person name="Tanai H."/>
            <person name="Kimata M."/>
            <person name="Watanabe M."/>
            <person name="Hiraoka S."/>
            <person name="Chiba Y."/>
            <person name="Ishida S."/>
            <person name="Ono Y."/>
            <person name="Takiguchi S."/>
            <person name="Watanabe S."/>
            <person name="Yosida M."/>
            <person name="Hotuta T."/>
            <person name="Kusano J."/>
            <person name="Kanehori K."/>
            <person name="Takahashi-Fujii A."/>
            <person name="Hara H."/>
            <person name="Tanase T.-O."/>
            <person name="Nomura Y."/>
            <person name="Togiya S."/>
            <person name="Komai F."/>
            <person name="Hara R."/>
            <person name="Takeuchi K."/>
            <person name="Arita M."/>
            <person name="Imose N."/>
            <person name="Musashino K."/>
            <person name="Yuuki H."/>
            <person name="Oshima A."/>
            <person name="Sasaki N."/>
            <person name="Aotsuka S."/>
            <person name="Yoshikawa Y."/>
            <person name="Matsunawa H."/>
            <person name="Ichihara T."/>
            <person name="Shiohata N."/>
            <person name="Sano S."/>
            <person name="Moriya S."/>
            <person name="Momiyama H."/>
            <person name="Satoh N."/>
            <person name="Takami S."/>
            <person name="Terashima Y."/>
            <person name="Suzuki O."/>
            <person name="Nakagawa S."/>
            <person name="Senoh A."/>
            <person name="Mizoguchi H."/>
            <person name="Goto Y."/>
            <person name="Shimizu F."/>
            <person name="Wakebe H."/>
            <person name="Hishigaki H."/>
            <person name="Watanabe T."/>
            <person name="Sugiyama A."/>
            <person name="Takemoto M."/>
            <person name="Kawakami B."/>
            <person name="Yamazaki M."/>
            <person name="Watanabe K."/>
            <person name="Kumagai A."/>
            <person name="Itakura S."/>
            <person name="Fukuzumi Y."/>
            <person name="Fujimori Y."/>
            <person name="Komiyama M."/>
            <person name="Tashiro H."/>
            <person name="Tanigami A."/>
            <person name="Fujiwara T."/>
            <person name="Ono T."/>
            <person name="Yamada K."/>
            <person name="Fujii Y."/>
            <person name="Ozaki K."/>
            <person name="Hirao M."/>
            <person name="Ohmori Y."/>
            <person name="Kawabata A."/>
            <person name="Hikiji T."/>
            <person name="Kobatake N."/>
            <person name="Inagaki H."/>
            <person name="Ikema Y."/>
            <person name="Okamoto S."/>
            <person name="Okitani R."/>
            <person name="Kawakami T."/>
            <person name="Noguchi S."/>
            <person name="Itoh T."/>
            <person name="Shigeta K."/>
            <person name="Senba T."/>
            <person name="Matsumura K."/>
            <person name="Nakajima Y."/>
            <person name="Mizuno T."/>
            <person name="Morinaga M."/>
            <person name="Sasaki M."/>
            <person name="Togashi T."/>
            <person name="Oyama M."/>
            <person name="Hata H."/>
            <person name="Watanabe M."/>
            <person name="Komatsu T."/>
            <person name="Mizushima-Sugano J."/>
            <person name="Satoh T."/>
            <person name="Shirai Y."/>
            <person name="Takahashi Y."/>
            <person name="Nakagawa K."/>
            <person name="Okumura K."/>
            <person name="Nagase T."/>
            <person name="Nomura N."/>
            <person name="Kikuchi H."/>
            <person name="Masuho Y."/>
            <person name="Yamashita R."/>
            <person name="Nakai K."/>
            <person name="Yada T."/>
            <person name="Nakamura Y."/>
            <person name="Ohara O."/>
            <person name="Isogai T."/>
            <person name="Sugano S."/>
        </authorList>
    </citation>
    <scope>NUCLEOTIDE SEQUENCE [LARGE SCALE MRNA] (ISOFORM 1)</scope>
    <scope>VARIANTS PRO-181; ALA-341 AND THR-960</scope>
</reference>
<reference key="3">
    <citation type="journal article" date="2005" name="Nature">
        <title>DNA sequence and analysis of human chromosome 18.</title>
        <authorList>
            <person name="Nusbaum C."/>
            <person name="Zody M.C."/>
            <person name="Borowsky M.L."/>
            <person name="Kamal M."/>
            <person name="Kodira C.D."/>
            <person name="Taylor T.D."/>
            <person name="Whittaker C.A."/>
            <person name="Chang J.L."/>
            <person name="Cuomo C.A."/>
            <person name="Dewar K."/>
            <person name="FitzGerald M.G."/>
            <person name="Yang X."/>
            <person name="Abouelleil A."/>
            <person name="Allen N.R."/>
            <person name="Anderson S."/>
            <person name="Bloom T."/>
            <person name="Bugalter B."/>
            <person name="Butler J."/>
            <person name="Cook A."/>
            <person name="DeCaprio D."/>
            <person name="Engels R."/>
            <person name="Garber M."/>
            <person name="Gnirke A."/>
            <person name="Hafez N."/>
            <person name="Hall J.L."/>
            <person name="Norman C.H."/>
            <person name="Itoh T."/>
            <person name="Jaffe D.B."/>
            <person name="Kuroki Y."/>
            <person name="Lehoczky J."/>
            <person name="Lui A."/>
            <person name="Macdonald P."/>
            <person name="Mauceli E."/>
            <person name="Mikkelsen T.S."/>
            <person name="Naylor J.W."/>
            <person name="Nicol R."/>
            <person name="Nguyen C."/>
            <person name="Noguchi H."/>
            <person name="O'Leary S.B."/>
            <person name="Piqani B."/>
            <person name="Smith C.L."/>
            <person name="Talamas J.A."/>
            <person name="Topham K."/>
            <person name="Totoki Y."/>
            <person name="Toyoda A."/>
            <person name="Wain H.M."/>
            <person name="Young S.K."/>
            <person name="Zeng Q."/>
            <person name="Zimmer A.R."/>
            <person name="Fujiyama A."/>
            <person name="Hattori M."/>
            <person name="Birren B.W."/>
            <person name="Sakaki Y."/>
            <person name="Lander E.S."/>
        </authorList>
    </citation>
    <scope>NUCLEOTIDE SEQUENCE [LARGE SCALE GENOMIC DNA]</scope>
</reference>
<reference key="4">
    <citation type="journal article" date="2004" name="Genome Res.">
        <title>The status, quality, and expansion of the NIH full-length cDNA project: the Mammalian Gene Collection (MGC).</title>
        <authorList>
            <consortium name="The MGC Project Team"/>
        </authorList>
    </citation>
    <scope>NUCLEOTIDE SEQUENCE [LARGE SCALE MRNA] (ISOFORM 2)</scope>
    <scope>VARIANTS PRO-181 AND ALA-341</scope>
</reference>
<reference key="5">
    <citation type="journal article" date="1993" name="J. Cell Sci.">
        <title>The globular head domain of titin extends into the center of the sarcomeric M band. cDNA cloning, epitope mapping and immunoelectron microscopy of two titin-associated proteins.</title>
        <authorList>
            <person name="Vinkemeier U."/>
            <person name="Obermann W."/>
            <person name="Weber K."/>
            <person name="Fuerst D.O."/>
        </authorList>
    </citation>
    <scope>NUCLEOTIDE SEQUENCE [MRNA] OF 99-1685 (ISOFORM 2)</scope>
    <scope>VARIANTS PRO-181; ALA-341 AND THR-960</scope>
    <source>
        <tissue>Skeletal muscle</tissue>
    </source>
</reference>
<reference key="6">
    <citation type="journal article" date="2004" name="Acta Biochim. Biophys. Sin.">
        <title>Characterization of MR-1, a novel myofibrillogenesis regulator in human muscle.</title>
        <authorList>
            <person name="Li T.-B."/>
            <person name="Liu X.-H."/>
            <person name="Feng S."/>
            <person name="Hu Y."/>
            <person name="Yang W.-X."/>
            <person name="Han Y."/>
            <person name="Wang Y.-G."/>
            <person name="Gong L.-M."/>
        </authorList>
    </citation>
    <scope>INTERACTION WITH PNKD</scope>
</reference>
<name>MYOM1_HUMAN</name>
<protein>
    <recommendedName>
        <fullName>Myomesin-1</fullName>
    </recommendedName>
    <alternativeName>
        <fullName>190 kDa connectin-associated protein</fullName>
    </alternativeName>
    <alternativeName>
        <fullName>190 kDa titin-associated protein</fullName>
    </alternativeName>
    <alternativeName>
        <fullName>Myomesin family member 1</fullName>
    </alternativeName>
</protein>
<accession>P52179</accession>
<accession>Q14BD6</accession>
<accession>Q6H969</accession>
<accession>Q6ZUU0</accession>